<reference key="1">
    <citation type="submission" date="2008-05" db="EMBL/GenBank/DDBJ databases">
        <title>Complete sequence of chromosome of Geobacter lovleyi SZ.</title>
        <authorList>
            <consortium name="US DOE Joint Genome Institute"/>
            <person name="Lucas S."/>
            <person name="Copeland A."/>
            <person name="Lapidus A."/>
            <person name="Glavina del Rio T."/>
            <person name="Dalin E."/>
            <person name="Tice H."/>
            <person name="Bruce D."/>
            <person name="Goodwin L."/>
            <person name="Pitluck S."/>
            <person name="Chertkov O."/>
            <person name="Meincke L."/>
            <person name="Brettin T."/>
            <person name="Detter J.C."/>
            <person name="Han C."/>
            <person name="Tapia R."/>
            <person name="Kuske C.R."/>
            <person name="Schmutz J."/>
            <person name="Larimer F."/>
            <person name="Land M."/>
            <person name="Hauser L."/>
            <person name="Kyrpides N."/>
            <person name="Mikhailova N."/>
            <person name="Sung Y."/>
            <person name="Fletcher K.E."/>
            <person name="Ritalahti K.M."/>
            <person name="Loeffler F.E."/>
            <person name="Richardson P."/>
        </authorList>
    </citation>
    <scope>NUCLEOTIDE SEQUENCE [LARGE SCALE GENOMIC DNA]</scope>
    <source>
        <strain>ATCC BAA-1151 / DSM 17278 / SZ</strain>
    </source>
</reference>
<comment type="function">
    <text evidence="1">Catalyzes the conversion of 4-hydroxy-tetrahydrodipicolinate (HTPA) to tetrahydrodipicolinate.</text>
</comment>
<comment type="catalytic activity">
    <reaction evidence="1">
        <text>(S)-2,3,4,5-tetrahydrodipicolinate + NAD(+) + H2O = (2S,4S)-4-hydroxy-2,3,4,5-tetrahydrodipicolinate + NADH + H(+)</text>
        <dbReference type="Rhea" id="RHEA:35323"/>
        <dbReference type="ChEBI" id="CHEBI:15377"/>
        <dbReference type="ChEBI" id="CHEBI:15378"/>
        <dbReference type="ChEBI" id="CHEBI:16845"/>
        <dbReference type="ChEBI" id="CHEBI:57540"/>
        <dbReference type="ChEBI" id="CHEBI:57945"/>
        <dbReference type="ChEBI" id="CHEBI:67139"/>
        <dbReference type="EC" id="1.17.1.8"/>
    </reaction>
</comment>
<comment type="catalytic activity">
    <reaction evidence="1">
        <text>(S)-2,3,4,5-tetrahydrodipicolinate + NADP(+) + H2O = (2S,4S)-4-hydroxy-2,3,4,5-tetrahydrodipicolinate + NADPH + H(+)</text>
        <dbReference type="Rhea" id="RHEA:35331"/>
        <dbReference type="ChEBI" id="CHEBI:15377"/>
        <dbReference type="ChEBI" id="CHEBI:15378"/>
        <dbReference type="ChEBI" id="CHEBI:16845"/>
        <dbReference type="ChEBI" id="CHEBI:57783"/>
        <dbReference type="ChEBI" id="CHEBI:58349"/>
        <dbReference type="ChEBI" id="CHEBI:67139"/>
        <dbReference type="EC" id="1.17.1.8"/>
    </reaction>
</comment>
<comment type="pathway">
    <text evidence="1">Amino-acid biosynthesis; L-lysine biosynthesis via DAP pathway; (S)-tetrahydrodipicolinate from L-aspartate: step 4/4.</text>
</comment>
<comment type="subcellular location">
    <subcellularLocation>
        <location evidence="1">Cytoplasm</location>
    </subcellularLocation>
</comment>
<comment type="similarity">
    <text evidence="1">Belongs to the DapB family.</text>
</comment>
<comment type="caution">
    <text evidence="2">Was originally thought to be a dihydrodipicolinate reductase (DHDPR), catalyzing the conversion of dihydrodipicolinate to tetrahydrodipicolinate. However, it was shown in E.coli that the substrate of the enzymatic reaction is not dihydrodipicolinate (DHDP) but in fact (2S,4S)-4-hydroxy-2,3,4,5-tetrahydrodipicolinic acid (HTPA), the product released by the DapA-catalyzed reaction.</text>
</comment>
<evidence type="ECO:0000255" key="1">
    <source>
        <dbReference type="HAMAP-Rule" id="MF_00102"/>
    </source>
</evidence>
<evidence type="ECO:0000305" key="2"/>
<protein>
    <recommendedName>
        <fullName evidence="1">4-hydroxy-tetrahydrodipicolinate reductase</fullName>
        <shortName evidence="1">HTPA reductase</shortName>
        <ecNumber evidence="1">1.17.1.8</ecNumber>
    </recommendedName>
</protein>
<name>DAPB_TRIL1</name>
<sequence>MIKIAVCGAAGRMGQRIIVAAVEAGCIISGALERPGHPQIGQDAGLIAGCGQLGVAISDDLNAVVEGCDVLIDFTTPKISLKNLEVCGLKKKSIVIGSTGFTPEERALAAELAKDIPAVLAPNMSVGVNVCFKMLKDLAKTLGDDFDVEIVELHHNKKKDSPSGTAVRMGEVVAEALGRDYNQVANYHREGICGERTKEEIGMQTVRGGDIVGEHTVYFIGMGERIEISHRAMSRDMFSRGSVRAAKWIVGKQPGLYDMQDVLGLK</sequence>
<gene>
    <name evidence="1" type="primary">dapB</name>
    <name type="ordered locus">Glov_3042</name>
</gene>
<accession>B3E935</accession>
<proteinExistence type="inferred from homology"/>
<keyword id="KW-0028">Amino-acid biosynthesis</keyword>
<keyword id="KW-0963">Cytoplasm</keyword>
<keyword id="KW-0220">Diaminopimelate biosynthesis</keyword>
<keyword id="KW-0457">Lysine biosynthesis</keyword>
<keyword id="KW-0520">NAD</keyword>
<keyword id="KW-0521">NADP</keyword>
<keyword id="KW-0560">Oxidoreductase</keyword>
<keyword id="KW-1185">Reference proteome</keyword>
<feature type="chain" id="PRO_1000093972" description="4-hydroxy-tetrahydrodipicolinate reductase">
    <location>
        <begin position="1"/>
        <end position="266"/>
    </location>
</feature>
<feature type="active site" description="Proton donor/acceptor" evidence="1">
    <location>
        <position position="154"/>
    </location>
</feature>
<feature type="active site" description="Proton donor" evidence="1">
    <location>
        <position position="158"/>
    </location>
</feature>
<feature type="binding site" evidence="1">
    <location>
        <begin position="8"/>
        <end position="13"/>
    </location>
    <ligand>
        <name>NAD(+)</name>
        <dbReference type="ChEBI" id="CHEBI:57540"/>
    </ligand>
</feature>
<feature type="binding site" evidence="1">
    <location>
        <position position="33"/>
    </location>
    <ligand>
        <name>NAD(+)</name>
        <dbReference type="ChEBI" id="CHEBI:57540"/>
    </ligand>
</feature>
<feature type="binding site" evidence="1">
    <location>
        <position position="34"/>
    </location>
    <ligand>
        <name>NADP(+)</name>
        <dbReference type="ChEBI" id="CHEBI:58349"/>
    </ligand>
</feature>
<feature type="binding site" evidence="1">
    <location>
        <begin position="97"/>
        <end position="99"/>
    </location>
    <ligand>
        <name>NAD(+)</name>
        <dbReference type="ChEBI" id="CHEBI:57540"/>
    </ligand>
</feature>
<feature type="binding site" evidence="1">
    <location>
        <begin position="121"/>
        <end position="124"/>
    </location>
    <ligand>
        <name>NAD(+)</name>
        <dbReference type="ChEBI" id="CHEBI:57540"/>
    </ligand>
</feature>
<feature type="binding site" evidence="1">
    <location>
        <position position="155"/>
    </location>
    <ligand>
        <name>(S)-2,3,4,5-tetrahydrodipicolinate</name>
        <dbReference type="ChEBI" id="CHEBI:16845"/>
    </ligand>
</feature>
<feature type="binding site" evidence="1">
    <location>
        <begin position="164"/>
        <end position="165"/>
    </location>
    <ligand>
        <name>(S)-2,3,4,5-tetrahydrodipicolinate</name>
        <dbReference type="ChEBI" id="CHEBI:16845"/>
    </ligand>
</feature>
<organism>
    <name type="scientific">Trichlorobacter lovleyi (strain ATCC BAA-1151 / DSM 17278 / SZ)</name>
    <name type="common">Geobacter lovleyi</name>
    <dbReference type="NCBI Taxonomy" id="398767"/>
    <lineage>
        <taxon>Bacteria</taxon>
        <taxon>Pseudomonadati</taxon>
        <taxon>Thermodesulfobacteriota</taxon>
        <taxon>Desulfuromonadia</taxon>
        <taxon>Geobacterales</taxon>
        <taxon>Geobacteraceae</taxon>
        <taxon>Trichlorobacter</taxon>
    </lineage>
</organism>
<dbReference type="EC" id="1.17.1.8" evidence="1"/>
<dbReference type="EMBL" id="CP001089">
    <property type="protein sequence ID" value="ACD96748.1"/>
    <property type="molecule type" value="Genomic_DNA"/>
</dbReference>
<dbReference type="RefSeq" id="WP_012471073.1">
    <property type="nucleotide sequence ID" value="NC_010814.1"/>
</dbReference>
<dbReference type="SMR" id="B3E935"/>
<dbReference type="STRING" id="398767.Glov_3042"/>
<dbReference type="KEGG" id="glo:Glov_3042"/>
<dbReference type="eggNOG" id="COG0289">
    <property type="taxonomic scope" value="Bacteria"/>
</dbReference>
<dbReference type="HOGENOM" id="CLU_047479_2_1_7"/>
<dbReference type="OrthoDB" id="9790352at2"/>
<dbReference type="UniPathway" id="UPA00034">
    <property type="reaction ID" value="UER00018"/>
</dbReference>
<dbReference type="Proteomes" id="UP000002420">
    <property type="component" value="Chromosome"/>
</dbReference>
<dbReference type="GO" id="GO:0005829">
    <property type="term" value="C:cytosol"/>
    <property type="evidence" value="ECO:0007669"/>
    <property type="project" value="TreeGrafter"/>
</dbReference>
<dbReference type="GO" id="GO:0008839">
    <property type="term" value="F:4-hydroxy-tetrahydrodipicolinate reductase"/>
    <property type="evidence" value="ECO:0007669"/>
    <property type="project" value="UniProtKB-EC"/>
</dbReference>
<dbReference type="GO" id="GO:0051287">
    <property type="term" value="F:NAD binding"/>
    <property type="evidence" value="ECO:0007669"/>
    <property type="project" value="UniProtKB-UniRule"/>
</dbReference>
<dbReference type="GO" id="GO:0050661">
    <property type="term" value="F:NADP binding"/>
    <property type="evidence" value="ECO:0007669"/>
    <property type="project" value="UniProtKB-UniRule"/>
</dbReference>
<dbReference type="GO" id="GO:0016726">
    <property type="term" value="F:oxidoreductase activity, acting on CH or CH2 groups, NAD or NADP as acceptor"/>
    <property type="evidence" value="ECO:0007669"/>
    <property type="project" value="UniProtKB-UniRule"/>
</dbReference>
<dbReference type="GO" id="GO:0019877">
    <property type="term" value="P:diaminopimelate biosynthetic process"/>
    <property type="evidence" value="ECO:0007669"/>
    <property type="project" value="UniProtKB-UniRule"/>
</dbReference>
<dbReference type="GO" id="GO:0009089">
    <property type="term" value="P:lysine biosynthetic process via diaminopimelate"/>
    <property type="evidence" value="ECO:0007669"/>
    <property type="project" value="UniProtKB-UniRule"/>
</dbReference>
<dbReference type="CDD" id="cd02274">
    <property type="entry name" value="DHDPR_N"/>
    <property type="match status" value="1"/>
</dbReference>
<dbReference type="FunFam" id="3.30.360.10:FF:000004">
    <property type="entry name" value="4-hydroxy-tetrahydrodipicolinate reductase"/>
    <property type="match status" value="1"/>
</dbReference>
<dbReference type="Gene3D" id="3.30.360.10">
    <property type="entry name" value="Dihydrodipicolinate Reductase, domain 2"/>
    <property type="match status" value="1"/>
</dbReference>
<dbReference type="Gene3D" id="3.40.50.720">
    <property type="entry name" value="NAD(P)-binding Rossmann-like Domain"/>
    <property type="match status" value="1"/>
</dbReference>
<dbReference type="HAMAP" id="MF_00102">
    <property type="entry name" value="DapB"/>
    <property type="match status" value="1"/>
</dbReference>
<dbReference type="InterPro" id="IPR022663">
    <property type="entry name" value="DapB_C"/>
</dbReference>
<dbReference type="InterPro" id="IPR000846">
    <property type="entry name" value="DapB_N"/>
</dbReference>
<dbReference type="InterPro" id="IPR022664">
    <property type="entry name" value="DapB_N_CS"/>
</dbReference>
<dbReference type="InterPro" id="IPR023940">
    <property type="entry name" value="DHDPR_bac"/>
</dbReference>
<dbReference type="InterPro" id="IPR036291">
    <property type="entry name" value="NAD(P)-bd_dom_sf"/>
</dbReference>
<dbReference type="NCBIfam" id="TIGR00036">
    <property type="entry name" value="dapB"/>
    <property type="match status" value="1"/>
</dbReference>
<dbReference type="PANTHER" id="PTHR20836:SF0">
    <property type="entry name" value="4-HYDROXY-TETRAHYDRODIPICOLINATE REDUCTASE 1, CHLOROPLASTIC-RELATED"/>
    <property type="match status" value="1"/>
</dbReference>
<dbReference type="PANTHER" id="PTHR20836">
    <property type="entry name" value="DIHYDRODIPICOLINATE REDUCTASE"/>
    <property type="match status" value="1"/>
</dbReference>
<dbReference type="Pfam" id="PF05173">
    <property type="entry name" value="DapB_C"/>
    <property type="match status" value="1"/>
</dbReference>
<dbReference type="Pfam" id="PF01113">
    <property type="entry name" value="DapB_N"/>
    <property type="match status" value="1"/>
</dbReference>
<dbReference type="PIRSF" id="PIRSF000161">
    <property type="entry name" value="DHPR"/>
    <property type="match status" value="1"/>
</dbReference>
<dbReference type="SUPFAM" id="SSF55347">
    <property type="entry name" value="Glyceraldehyde-3-phosphate dehydrogenase-like, C-terminal domain"/>
    <property type="match status" value="1"/>
</dbReference>
<dbReference type="SUPFAM" id="SSF51735">
    <property type="entry name" value="NAD(P)-binding Rossmann-fold domains"/>
    <property type="match status" value="1"/>
</dbReference>
<dbReference type="PROSITE" id="PS01298">
    <property type="entry name" value="DAPB"/>
    <property type="match status" value="1"/>
</dbReference>